<evidence type="ECO:0000255" key="1">
    <source>
        <dbReference type="HAMAP-Rule" id="MF_00258"/>
    </source>
</evidence>
<keyword id="KW-0133">Cell shape</keyword>
<keyword id="KW-0961">Cell wall biogenesis/degradation</keyword>
<keyword id="KW-0413">Isomerase</keyword>
<keyword id="KW-0573">Peptidoglycan synthesis</keyword>
<accession>Q72I52</accession>
<gene>
    <name evidence="1" type="primary">murI</name>
    <name type="ordered locus">TT_C1280</name>
</gene>
<feature type="chain" id="PRO_1000078583" description="Glutamate racemase">
    <location>
        <begin position="1"/>
        <end position="257"/>
    </location>
</feature>
<feature type="active site" description="Proton donor/acceptor" evidence="1">
    <location>
        <position position="75"/>
    </location>
</feature>
<feature type="active site" description="Proton donor/acceptor" evidence="1">
    <location>
        <position position="176"/>
    </location>
</feature>
<feature type="binding site" evidence="1">
    <location>
        <begin position="12"/>
        <end position="13"/>
    </location>
    <ligand>
        <name>substrate</name>
    </ligand>
</feature>
<feature type="binding site" evidence="1">
    <location>
        <begin position="44"/>
        <end position="45"/>
    </location>
    <ligand>
        <name>substrate</name>
    </ligand>
</feature>
<feature type="binding site" evidence="1">
    <location>
        <begin position="76"/>
        <end position="77"/>
    </location>
    <ligand>
        <name>substrate</name>
    </ligand>
</feature>
<feature type="binding site" evidence="1">
    <location>
        <begin position="177"/>
        <end position="178"/>
    </location>
    <ligand>
        <name>substrate</name>
    </ligand>
</feature>
<organism>
    <name type="scientific">Thermus thermophilus (strain ATCC BAA-163 / DSM 7039 / HB27)</name>
    <dbReference type="NCBI Taxonomy" id="262724"/>
    <lineage>
        <taxon>Bacteria</taxon>
        <taxon>Thermotogati</taxon>
        <taxon>Deinococcota</taxon>
        <taxon>Deinococci</taxon>
        <taxon>Thermales</taxon>
        <taxon>Thermaceae</taxon>
        <taxon>Thermus</taxon>
    </lineage>
</organism>
<comment type="function">
    <text evidence="1">Provides the (R)-glutamate required for cell wall biosynthesis.</text>
</comment>
<comment type="catalytic activity">
    <reaction evidence="1">
        <text>L-glutamate = D-glutamate</text>
        <dbReference type="Rhea" id="RHEA:12813"/>
        <dbReference type="ChEBI" id="CHEBI:29985"/>
        <dbReference type="ChEBI" id="CHEBI:29986"/>
        <dbReference type="EC" id="5.1.1.3"/>
    </reaction>
</comment>
<comment type="pathway">
    <text evidence="1">Cell wall biogenesis; peptidoglycan biosynthesis.</text>
</comment>
<comment type="similarity">
    <text evidence="1">Belongs to the aspartate/glutamate racemases family.</text>
</comment>
<reference key="1">
    <citation type="journal article" date="2004" name="Nat. Biotechnol.">
        <title>The genome sequence of the extreme thermophile Thermus thermophilus.</title>
        <authorList>
            <person name="Henne A."/>
            <person name="Brueggemann H."/>
            <person name="Raasch C."/>
            <person name="Wiezer A."/>
            <person name="Hartsch T."/>
            <person name="Liesegang H."/>
            <person name="Johann A."/>
            <person name="Lienard T."/>
            <person name="Gohl O."/>
            <person name="Martinez-Arias R."/>
            <person name="Jacobi C."/>
            <person name="Starkuviene V."/>
            <person name="Schlenczeck S."/>
            <person name="Dencker S."/>
            <person name="Huber R."/>
            <person name="Klenk H.-P."/>
            <person name="Kramer W."/>
            <person name="Merkl R."/>
            <person name="Gottschalk G."/>
            <person name="Fritz H.-J."/>
        </authorList>
    </citation>
    <scope>NUCLEOTIDE SEQUENCE [LARGE SCALE GENOMIC DNA]</scope>
    <source>
        <strain>ATCC BAA-163 / DSM 7039 / HB27</strain>
    </source>
</reference>
<proteinExistence type="inferred from homology"/>
<sequence>MKDPKAPIGVFDSGVGGLTVLKALRRLLPREEFLYFGDTARVPYGGKPLAMVRRFAWEIAGFLLRQGVKAIVVACNTASSAALPDLAEDLSVPVFGVVEPAARAARGFRKVGLIGTQATVESGAYPRYVDLAWAKACPLFVPLVEEGLWDDPVALLVARHYLEDAPKDLEALILGCTHYPFLKGAIGAVLPGVALLDSAELTAREVARALEAEGLLNPEGRGRTLHLVTGDPEAYRALAERLGERVEAVRRVSLEEL</sequence>
<dbReference type="EC" id="5.1.1.3" evidence="1"/>
<dbReference type="EMBL" id="AE017221">
    <property type="protein sequence ID" value="AAS81622.1"/>
    <property type="molecule type" value="Genomic_DNA"/>
</dbReference>
<dbReference type="RefSeq" id="WP_011173680.1">
    <property type="nucleotide sequence ID" value="NC_005835.1"/>
</dbReference>
<dbReference type="SMR" id="Q72I52"/>
<dbReference type="KEGG" id="tth:TT_C1280"/>
<dbReference type="eggNOG" id="COG0796">
    <property type="taxonomic scope" value="Bacteria"/>
</dbReference>
<dbReference type="HOGENOM" id="CLU_052344_0_2_0"/>
<dbReference type="OrthoDB" id="9801055at2"/>
<dbReference type="UniPathway" id="UPA00219"/>
<dbReference type="Proteomes" id="UP000000592">
    <property type="component" value="Chromosome"/>
</dbReference>
<dbReference type="GO" id="GO:0008881">
    <property type="term" value="F:glutamate racemase activity"/>
    <property type="evidence" value="ECO:0007669"/>
    <property type="project" value="UniProtKB-UniRule"/>
</dbReference>
<dbReference type="GO" id="GO:0071555">
    <property type="term" value="P:cell wall organization"/>
    <property type="evidence" value="ECO:0007669"/>
    <property type="project" value="UniProtKB-KW"/>
</dbReference>
<dbReference type="GO" id="GO:0009252">
    <property type="term" value="P:peptidoglycan biosynthetic process"/>
    <property type="evidence" value="ECO:0007669"/>
    <property type="project" value="UniProtKB-UniRule"/>
</dbReference>
<dbReference type="GO" id="GO:0008360">
    <property type="term" value="P:regulation of cell shape"/>
    <property type="evidence" value="ECO:0007669"/>
    <property type="project" value="UniProtKB-KW"/>
</dbReference>
<dbReference type="FunFam" id="3.40.50.1860:FF:000002">
    <property type="entry name" value="Glutamate racemase"/>
    <property type="match status" value="1"/>
</dbReference>
<dbReference type="Gene3D" id="3.40.50.1860">
    <property type="match status" value="2"/>
</dbReference>
<dbReference type="HAMAP" id="MF_00258">
    <property type="entry name" value="Glu_racemase"/>
    <property type="match status" value="1"/>
</dbReference>
<dbReference type="InterPro" id="IPR015942">
    <property type="entry name" value="Asp/Glu/hydantoin_racemase"/>
</dbReference>
<dbReference type="InterPro" id="IPR001920">
    <property type="entry name" value="Asp/Glu_race"/>
</dbReference>
<dbReference type="InterPro" id="IPR018187">
    <property type="entry name" value="Asp/Glu_racemase_AS_1"/>
</dbReference>
<dbReference type="InterPro" id="IPR033134">
    <property type="entry name" value="Asp/Glu_racemase_AS_2"/>
</dbReference>
<dbReference type="InterPro" id="IPR004391">
    <property type="entry name" value="Glu_race"/>
</dbReference>
<dbReference type="NCBIfam" id="TIGR00067">
    <property type="entry name" value="glut_race"/>
    <property type="match status" value="1"/>
</dbReference>
<dbReference type="PANTHER" id="PTHR21198">
    <property type="entry name" value="GLUTAMATE RACEMASE"/>
    <property type="match status" value="1"/>
</dbReference>
<dbReference type="PANTHER" id="PTHR21198:SF2">
    <property type="entry name" value="GLUTAMATE RACEMASE"/>
    <property type="match status" value="1"/>
</dbReference>
<dbReference type="Pfam" id="PF01177">
    <property type="entry name" value="Asp_Glu_race"/>
    <property type="match status" value="1"/>
</dbReference>
<dbReference type="SUPFAM" id="SSF53681">
    <property type="entry name" value="Aspartate/glutamate racemase"/>
    <property type="match status" value="2"/>
</dbReference>
<dbReference type="PROSITE" id="PS00923">
    <property type="entry name" value="ASP_GLU_RACEMASE_1"/>
    <property type="match status" value="1"/>
</dbReference>
<dbReference type="PROSITE" id="PS00924">
    <property type="entry name" value="ASP_GLU_RACEMASE_2"/>
    <property type="match status" value="1"/>
</dbReference>
<name>MURI_THET2</name>
<protein>
    <recommendedName>
        <fullName evidence="1">Glutamate racemase</fullName>
        <ecNumber evidence="1">5.1.1.3</ecNumber>
    </recommendedName>
</protein>